<sequence length="248" mass="26948">MKYTLVGNGRMGQQVLGAIEASGEHTVHDILDVDAEISEQSFSGSDVIVDFTVRDAFLVNLPAMLASRVPVVVGTTGWDREMSIVRSMVEKSGSSLLYSANFSLGVNVFLRTVREAARMIAPFEDFDIAFSEQHHTAKADFPSGTALRAAEMILEANSRKKSIISQLSTDRKIEPDELQVAAIRLGSVFGQHAAAINSESDDIVVSHTARNRKGFAGGAVQAGKWLAQKHTEQPGFYTMDDFLDEVLG</sequence>
<evidence type="ECO:0000255" key="1">
    <source>
        <dbReference type="HAMAP-Rule" id="MF_00102"/>
    </source>
</evidence>
<evidence type="ECO:0000305" key="2"/>
<comment type="function">
    <text evidence="1">Catalyzes the conversion of 4-hydroxy-tetrahydrodipicolinate (HTPA) to tetrahydrodipicolinate.</text>
</comment>
<comment type="catalytic activity">
    <reaction evidence="1">
        <text>(S)-2,3,4,5-tetrahydrodipicolinate + NAD(+) + H2O = (2S,4S)-4-hydroxy-2,3,4,5-tetrahydrodipicolinate + NADH + H(+)</text>
        <dbReference type="Rhea" id="RHEA:35323"/>
        <dbReference type="ChEBI" id="CHEBI:15377"/>
        <dbReference type="ChEBI" id="CHEBI:15378"/>
        <dbReference type="ChEBI" id="CHEBI:16845"/>
        <dbReference type="ChEBI" id="CHEBI:57540"/>
        <dbReference type="ChEBI" id="CHEBI:57945"/>
        <dbReference type="ChEBI" id="CHEBI:67139"/>
        <dbReference type="EC" id="1.17.1.8"/>
    </reaction>
</comment>
<comment type="catalytic activity">
    <reaction evidence="1">
        <text>(S)-2,3,4,5-tetrahydrodipicolinate + NADP(+) + H2O = (2S,4S)-4-hydroxy-2,3,4,5-tetrahydrodipicolinate + NADPH + H(+)</text>
        <dbReference type="Rhea" id="RHEA:35331"/>
        <dbReference type="ChEBI" id="CHEBI:15377"/>
        <dbReference type="ChEBI" id="CHEBI:15378"/>
        <dbReference type="ChEBI" id="CHEBI:16845"/>
        <dbReference type="ChEBI" id="CHEBI:57783"/>
        <dbReference type="ChEBI" id="CHEBI:58349"/>
        <dbReference type="ChEBI" id="CHEBI:67139"/>
        <dbReference type="EC" id="1.17.1.8"/>
    </reaction>
</comment>
<comment type="pathway">
    <text evidence="1">Amino-acid biosynthesis; L-lysine biosynthesis via DAP pathway; (S)-tetrahydrodipicolinate from L-aspartate: step 4/4.</text>
</comment>
<comment type="subcellular location">
    <subcellularLocation>
        <location evidence="1">Cytoplasm</location>
    </subcellularLocation>
</comment>
<comment type="similarity">
    <text evidence="1">Belongs to the DapB family.</text>
</comment>
<comment type="caution">
    <text evidence="2">Was originally thought to be a dihydrodipicolinate reductase (DHDPR), catalyzing the conversion of dihydrodipicolinate to tetrahydrodipicolinate. However, it was shown in E.coli that the substrate of the enzymatic reaction is not dihydrodipicolinate (DHDP) but in fact (2S,4S)-4-hydroxy-2,3,4,5-tetrahydrodipicolinic acid (HTPA), the product released by the DapA-catalyzed reaction.</text>
</comment>
<keyword id="KW-0028">Amino-acid biosynthesis</keyword>
<keyword id="KW-0963">Cytoplasm</keyword>
<keyword id="KW-0220">Diaminopimelate biosynthesis</keyword>
<keyword id="KW-0457">Lysine biosynthesis</keyword>
<keyword id="KW-0520">NAD</keyword>
<keyword id="KW-0521">NADP</keyword>
<keyword id="KW-0560">Oxidoreductase</keyword>
<name>DAPB_CHLPB</name>
<gene>
    <name evidence="1" type="primary">dapB</name>
    <name type="ordered locus">Cphamn1_2084</name>
</gene>
<reference key="1">
    <citation type="submission" date="2008-06" db="EMBL/GenBank/DDBJ databases">
        <title>Complete sequence of Chlorobium phaeobacteroides BS1.</title>
        <authorList>
            <consortium name="US DOE Joint Genome Institute"/>
            <person name="Lucas S."/>
            <person name="Copeland A."/>
            <person name="Lapidus A."/>
            <person name="Glavina del Rio T."/>
            <person name="Dalin E."/>
            <person name="Tice H."/>
            <person name="Bruce D."/>
            <person name="Goodwin L."/>
            <person name="Pitluck S."/>
            <person name="Schmutz J."/>
            <person name="Larimer F."/>
            <person name="Land M."/>
            <person name="Hauser L."/>
            <person name="Kyrpides N."/>
            <person name="Ovchinnikova G."/>
            <person name="Li T."/>
            <person name="Liu Z."/>
            <person name="Zhao F."/>
            <person name="Overmann J."/>
            <person name="Bryant D.A."/>
            <person name="Richardson P."/>
        </authorList>
    </citation>
    <scope>NUCLEOTIDE SEQUENCE [LARGE SCALE GENOMIC DNA]</scope>
    <source>
        <strain>BS1</strain>
    </source>
</reference>
<feature type="chain" id="PRO_1000093954" description="4-hydroxy-tetrahydrodipicolinate reductase">
    <location>
        <begin position="1"/>
        <end position="248"/>
    </location>
</feature>
<feature type="active site" description="Proton donor/acceptor" evidence="1">
    <location>
        <position position="134"/>
    </location>
</feature>
<feature type="active site" description="Proton donor" evidence="1">
    <location>
        <position position="138"/>
    </location>
</feature>
<feature type="binding site" evidence="1">
    <location>
        <begin position="74"/>
        <end position="76"/>
    </location>
    <ligand>
        <name>NAD(+)</name>
        <dbReference type="ChEBI" id="CHEBI:57540"/>
    </ligand>
</feature>
<feature type="binding site" evidence="1">
    <location>
        <begin position="99"/>
        <end position="102"/>
    </location>
    <ligand>
        <name>NAD(+)</name>
        <dbReference type="ChEBI" id="CHEBI:57540"/>
    </ligand>
</feature>
<feature type="binding site" evidence="1">
    <location>
        <position position="135"/>
    </location>
    <ligand>
        <name>(S)-2,3,4,5-tetrahydrodipicolinate</name>
        <dbReference type="ChEBI" id="CHEBI:16845"/>
    </ligand>
</feature>
<feature type="binding site" evidence="1">
    <location>
        <begin position="144"/>
        <end position="145"/>
    </location>
    <ligand>
        <name>(S)-2,3,4,5-tetrahydrodipicolinate</name>
        <dbReference type="ChEBI" id="CHEBI:16845"/>
    </ligand>
</feature>
<organism>
    <name type="scientific">Chlorobium phaeobacteroides (strain BS1)</name>
    <dbReference type="NCBI Taxonomy" id="331678"/>
    <lineage>
        <taxon>Bacteria</taxon>
        <taxon>Pseudomonadati</taxon>
        <taxon>Chlorobiota</taxon>
        <taxon>Chlorobiia</taxon>
        <taxon>Chlorobiales</taxon>
        <taxon>Chlorobiaceae</taxon>
        <taxon>Chlorobium/Pelodictyon group</taxon>
        <taxon>Chlorobium</taxon>
    </lineage>
</organism>
<proteinExistence type="inferred from homology"/>
<accession>B3EN04</accession>
<protein>
    <recommendedName>
        <fullName evidence="1">4-hydroxy-tetrahydrodipicolinate reductase</fullName>
        <shortName evidence="1">HTPA reductase</shortName>
        <ecNumber evidence="1">1.17.1.8</ecNumber>
    </recommendedName>
</protein>
<dbReference type="EC" id="1.17.1.8" evidence="1"/>
<dbReference type="EMBL" id="CP001101">
    <property type="protein sequence ID" value="ACE04993.1"/>
    <property type="molecule type" value="Genomic_DNA"/>
</dbReference>
<dbReference type="SMR" id="B3EN04"/>
<dbReference type="STRING" id="331678.Cphamn1_2084"/>
<dbReference type="KEGG" id="cpb:Cphamn1_2084"/>
<dbReference type="eggNOG" id="COG0289">
    <property type="taxonomic scope" value="Bacteria"/>
</dbReference>
<dbReference type="HOGENOM" id="CLU_047479_1_0_10"/>
<dbReference type="OrthoDB" id="9790352at2"/>
<dbReference type="UniPathway" id="UPA00034">
    <property type="reaction ID" value="UER00018"/>
</dbReference>
<dbReference type="GO" id="GO:0005829">
    <property type="term" value="C:cytosol"/>
    <property type="evidence" value="ECO:0007669"/>
    <property type="project" value="TreeGrafter"/>
</dbReference>
<dbReference type="GO" id="GO:0008839">
    <property type="term" value="F:4-hydroxy-tetrahydrodipicolinate reductase"/>
    <property type="evidence" value="ECO:0007669"/>
    <property type="project" value="UniProtKB-EC"/>
</dbReference>
<dbReference type="GO" id="GO:0051287">
    <property type="term" value="F:NAD binding"/>
    <property type="evidence" value="ECO:0007669"/>
    <property type="project" value="UniProtKB-UniRule"/>
</dbReference>
<dbReference type="GO" id="GO:0050661">
    <property type="term" value="F:NADP binding"/>
    <property type="evidence" value="ECO:0007669"/>
    <property type="project" value="UniProtKB-UniRule"/>
</dbReference>
<dbReference type="GO" id="GO:0016726">
    <property type="term" value="F:oxidoreductase activity, acting on CH or CH2 groups, NAD or NADP as acceptor"/>
    <property type="evidence" value="ECO:0007669"/>
    <property type="project" value="UniProtKB-UniRule"/>
</dbReference>
<dbReference type="GO" id="GO:0019877">
    <property type="term" value="P:diaminopimelate biosynthetic process"/>
    <property type="evidence" value="ECO:0007669"/>
    <property type="project" value="UniProtKB-UniRule"/>
</dbReference>
<dbReference type="GO" id="GO:0009089">
    <property type="term" value="P:lysine biosynthetic process via diaminopimelate"/>
    <property type="evidence" value="ECO:0007669"/>
    <property type="project" value="UniProtKB-UniRule"/>
</dbReference>
<dbReference type="Gene3D" id="3.30.360.10">
    <property type="entry name" value="Dihydrodipicolinate Reductase, domain 2"/>
    <property type="match status" value="1"/>
</dbReference>
<dbReference type="Gene3D" id="3.40.50.720">
    <property type="entry name" value="NAD(P)-binding Rossmann-like Domain"/>
    <property type="match status" value="1"/>
</dbReference>
<dbReference type="HAMAP" id="MF_00102">
    <property type="entry name" value="DapB"/>
    <property type="match status" value="1"/>
</dbReference>
<dbReference type="InterPro" id="IPR022663">
    <property type="entry name" value="DapB_C"/>
</dbReference>
<dbReference type="InterPro" id="IPR000846">
    <property type="entry name" value="DapB_N"/>
</dbReference>
<dbReference type="InterPro" id="IPR023940">
    <property type="entry name" value="DHDPR_bac"/>
</dbReference>
<dbReference type="InterPro" id="IPR036291">
    <property type="entry name" value="NAD(P)-bd_dom_sf"/>
</dbReference>
<dbReference type="NCBIfam" id="TIGR00036">
    <property type="entry name" value="dapB"/>
    <property type="match status" value="1"/>
</dbReference>
<dbReference type="PANTHER" id="PTHR20836:SF0">
    <property type="entry name" value="4-HYDROXY-TETRAHYDRODIPICOLINATE REDUCTASE 1, CHLOROPLASTIC-RELATED"/>
    <property type="match status" value="1"/>
</dbReference>
<dbReference type="PANTHER" id="PTHR20836">
    <property type="entry name" value="DIHYDRODIPICOLINATE REDUCTASE"/>
    <property type="match status" value="1"/>
</dbReference>
<dbReference type="Pfam" id="PF05173">
    <property type="entry name" value="DapB_C"/>
    <property type="match status" value="1"/>
</dbReference>
<dbReference type="Pfam" id="PF01113">
    <property type="entry name" value="DapB_N"/>
    <property type="match status" value="1"/>
</dbReference>
<dbReference type="PIRSF" id="PIRSF000161">
    <property type="entry name" value="DHPR"/>
    <property type="match status" value="1"/>
</dbReference>
<dbReference type="SUPFAM" id="SSF55347">
    <property type="entry name" value="Glyceraldehyde-3-phosphate dehydrogenase-like, C-terminal domain"/>
    <property type="match status" value="1"/>
</dbReference>
<dbReference type="SUPFAM" id="SSF51735">
    <property type="entry name" value="NAD(P)-binding Rossmann-fold domains"/>
    <property type="match status" value="1"/>
</dbReference>